<gene>
    <name evidence="1" type="primary">rplT</name>
    <name type="ordered locus">C8J_0222</name>
</gene>
<reference key="1">
    <citation type="journal article" date="2007" name="J. Bacteriol.">
        <title>The complete genome sequence of Campylobacter jejuni strain 81116 (NCTC11828).</title>
        <authorList>
            <person name="Pearson B.M."/>
            <person name="Gaskin D.J.H."/>
            <person name="Segers R.P.A.M."/>
            <person name="Wells J.M."/>
            <person name="Nuijten P.J.M."/>
            <person name="van Vliet A.H.M."/>
        </authorList>
    </citation>
    <scope>NUCLEOTIDE SEQUENCE [LARGE SCALE GENOMIC DNA]</scope>
    <source>
        <strain>81116 / NCTC 11828</strain>
    </source>
</reference>
<organism>
    <name type="scientific">Campylobacter jejuni subsp. jejuni serotype O:6 (strain 81116 / NCTC 11828)</name>
    <dbReference type="NCBI Taxonomy" id="407148"/>
    <lineage>
        <taxon>Bacteria</taxon>
        <taxon>Pseudomonadati</taxon>
        <taxon>Campylobacterota</taxon>
        <taxon>Epsilonproteobacteria</taxon>
        <taxon>Campylobacterales</taxon>
        <taxon>Campylobacteraceae</taxon>
        <taxon>Campylobacter</taxon>
    </lineage>
</organism>
<comment type="function">
    <text evidence="1">Binds directly to 23S ribosomal RNA and is necessary for the in vitro assembly process of the 50S ribosomal subunit. It is not involved in the protein synthesizing functions of that subunit.</text>
</comment>
<comment type="similarity">
    <text evidence="1">Belongs to the bacterial ribosomal protein bL20 family.</text>
</comment>
<keyword id="KW-0687">Ribonucleoprotein</keyword>
<keyword id="KW-0689">Ribosomal protein</keyword>
<keyword id="KW-0694">RNA-binding</keyword>
<keyword id="KW-0699">rRNA-binding</keyword>
<dbReference type="EMBL" id="CP000814">
    <property type="protein sequence ID" value="ABV51821.1"/>
    <property type="molecule type" value="Genomic_DNA"/>
</dbReference>
<dbReference type="RefSeq" id="WP_002866382.1">
    <property type="nucleotide sequence ID" value="NC_009839.1"/>
</dbReference>
<dbReference type="SMR" id="A8FK34"/>
<dbReference type="KEGG" id="cju:C8J_0222"/>
<dbReference type="HOGENOM" id="CLU_123265_0_1_7"/>
<dbReference type="GO" id="GO:1990904">
    <property type="term" value="C:ribonucleoprotein complex"/>
    <property type="evidence" value="ECO:0007669"/>
    <property type="project" value="UniProtKB-KW"/>
</dbReference>
<dbReference type="GO" id="GO:0005840">
    <property type="term" value="C:ribosome"/>
    <property type="evidence" value="ECO:0007669"/>
    <property type="project" value="UniProtKB-KW"/>
</dbReference>
<dbReference type="GO" id="GO:0019843">
    <property type="term" value="F:rRNA binding"/>
    <property type="evidence" value="ECO:0007669"/>
    <property type="project" value="UniProtKB-UniRule"/>
</dbReference>
<dbReference type="GO" id="GO:0003735">
    <property type="term" value="F:structural constituent of ribosome"/>
    <property type="evidence" value="ECO:0007669"/>
    <property type="project" value="InterPro"/>
</dbReference>
<dbReference type="GO" id="GO:0000027">
    <property type="term" value="P:ribosomal large subunit assembly"/>
    <property type="evidence" value="ECO:0007669"/>
    <property type="project" value="UniProtKB-UniRule"/>
</dbReference>
<dbReference type="GO" id="GO:0006412">
    <property type="term" value="P:translation"/>
    <property type="evidence" value="ECO:0007669"/>
    <property type="project" value="InterPro"/>
</dbReference>
<dbReference type="CDD" id="cd07026">
    <property type="entry name" value="Ribosomal_L20"/>
    <property type="match status" value="1"/>
</dbReference>
<dbReference type="FunFam" id="1.10.1900.20:FF:000001">
    <property type="entry name" value="50S ribosomal protein L20"/>
    <property type="match status" value="1"/>
</dbReference>
<dbReference type="Gene3D" id="6.10.160.10">
    <property type="match status" value="1"/>
</dbReference>
<dbReference type="Gene3D" id="1.10.1900.20">
    <property type="entry name" value="Ribosomal protein L20"/>
    <property type="match status" value="1"/>
</dbReference>
<dbReference type="HAMAP" id="MF_00382">
    <property type="entry name" value="Ribosomal_bL20"/>
    <property type="match status" value="1"/>
</dbReference>
<dbReference type="InterPro" id="IPR005813">
    <property type="entry name" value="Ribosomal_bL20"/>
</dbReference>
<dbReference type="InterPro" id="IPR049946">
    <property type="entry name" value="RIBOSOMAL_L20_CS"/>
</dbReference>
<dbReference type="InterPro" id="IPR035566">
    <property type="entry name" value="Ribosomal_protein_bL20_C"/>
</dbReference>
<dbReference type="NCBIfam" id="TIGR01032">
    <property type="entry name" value="rplT_bact"/>
    <property type="match status" value="1"/>
</dbReference>
<dbReference type="PANTHER" id="PTHR10986">
    <property type="entry name" value="39S RIBOSOMAL PROTEIN L20"/>
    <property type="match status" value="1"/>
</dbReference>
<dbReference type="Pfam" id="PF00453">
    <property type="entry name" value="Ribosomal_L20"/>
    <property type="match status" value="1"/>
</dbReference>
<dbReference type="PRINTS" id="PR00062">
    <property type="entry name" value="RIBOSOMALL20"/>
</dbReference>
<dbReference type="SUPFAM" id="SSF74731">
    <property type="entry name" value="Ribosomal protein L20"/>
    <property type="match status" value="1"/>
</dbReference>
<dbReference type="PROSITE" id="PS00937">
    <property type="entry name" value="RIBOSOMAL_L20"/>
    <property type="match status" value="1"/>
</dbReference>
<protein>
    <recommendedName>
        <fullName evidence="1">Large ribosomal subunit protein bL20</fullName>
    </recommendedName>
    <alternativeName>
        <fullName evidence="2">50S ribosomal protein L20</fullName>
    </alternativeName>
</protein>
<evidence type="ECO:0000255" key="1">
    <source>
        <dbReference type="HAMAP-Rule" id="MF_00382"/>
    </source>
</evidence>
<evidence type="ECO:0000305" key="2"/>
<accession>A8FK34</accession>
<name>RL20_CAMJ8</name>
<feature type="chain" id="PRO_1000072181" description="Large ribosomal subunit protein bL20">
    <location>
        <begin position="1"/>
        <end position="117"/>
    </location>
</feature>
<proteinExistence type="inferred from homology"/>
<sequence>MARVKTGVVRRRRHKKVLKLARGFYSGRRKHFRKAKEQLERSLVYAYRDRRRKKRDFRRLWIVRINAACRLNDLSYSRFINGLKKAGIELDRKILADLAMNDSAAFAKIAEAAKKAL</sequence>